<proteinExistence type="inferred from homology"/>
<sequence>MSKWKDVKKVVLAYSGGLDTSIILKWLQTELGAEVVTFTADLGQGEELEPARKKAEMLGIKEIFIEDVREEFVRDFVFPMFRANAVYEGVYLLGTSIARPLISKHLIDIAKKTGADAIAHGATGKGNDQVRFELSAYALNPDIKIIAPWRDWSFKSRTQLLEFAEQHQIPVAKDKKGEAPFSVDANLLHSSSEGKVLEDPSQEAPEYVHMRTISPETAPDKATIIKIGFEKGDAVSINGERLSPATLLAKLNDYGRDNGIGRLDLVENRFVGMKSRGVYETPGGTILLAAHRAIESITLDRGAAHLKDELMPRYAELIYYGFWFSPEREMLQAAIDHSQRHVEGEVTLKLYKGNVMVIGRESAKSLYSDKLVTFEDDQGAYDQKDAAGFIKLNALRLRTLAARDRK</sequence>
<reference key="1">
    <citation type="journal article" date="2005" name="Infect. Immun.">
        <title>Whole-genome analyses of speciation events in pathogenic Brucellae.</title>
        <authorList>
            <person name="Chain P.S."/>
            <person name="Comerci D.J."/>
            <person name="Tolmasky M.E."/>
            <person name="Larimer F.W."/>
            <person name="Malfatti S.A."/>
            <person name="Vergez L.M."/>
            <person name="Aguero F."/>
            <person name="Land M.L."/>
            <person name="Ugalde R.A."/>
            <person name="Garcia E."/>
        </authorList>
    </citation>
    <scope>NUCLEOTIDE SEQUENCE [LARGE SCALE GENOMIC DNA]</scope>
    <source>
        <strain>2308</strain>
    </source>
</reference>
<name>ASSY_BRUA2</name>
<keyword id="KW-0028">Amino-acid biosynthesis</keyword>
<keyword id="KW-0055">Arginine biosynthesis</keyword>
<keyword id="KW-0067">ATP-binding</keyword>
<keyword id="KW-0963">Cytoplasm</keyword>
<keyword id="KW-0436">Ligase</keyword>
<keyword id="KW-0547">Nucleotide-binding</keyword>
<keyword id="KW-1185">Reference proteome</keyword>
<evidence type="ECO:0000255" key="1">
    <source>
        <dbReference type="HAMAP-Rule" id="MF_00005"/>
    </source>
</evidence>
<feature type="chain" id="PRO_0000263908" description="Argininosuccinate synthase">
    <location>
        <begin position="1"/>
        <end position="406"/>
    </location>
</feature>
<feature type="binding site" evidence="1">
    <location>
        <begin position="13"/>
        <end position="21"/>
    </location>
    <ligand>
        <name>ATP</name>
        <dbReference type="ChEBI" id="CHEBI:30616"/>
    </ligand>
</feature>
<feature type="binding site" evidence="1">
    <location>
        <position position="40"/>
    </location>
    <ligand>
        <name>ATP</name>
        <dbReference type="ChEBI" id="CHEBI:30616"/>
    </ligand>
</feature>
<feature type="binding site" evidence="1">
    <location>
        <position position="91"/>
    </location>
    <ligand>
        <name>L-citrulline</name>
        <dbReference type="ChEBI" id="CHEBI:57743"/>
    </ligand>
</feature>
<feature type="binding site" evidence="1">
    <location>
        <position position="96"/>
    </location>
    <ligand>
        <name>L-citrulline</name>
        <dbReference type="ChEBI" id="CHEBI:57743"/>
    </ligand>
</feature>
<feature type="binding site" evidence="1">
    <location>
        <position position="121"/>
    </location>
    <ligand>
        <name>ATP</name>
        <dbReference type="ChEBI" id="CHEBI:30616"/>
    </ligand>
</feature>
<feature type="binding site" evidence="1">
    <location>
        <position position="123"/>
    </location>
    <ligand>
        <name>L-aspartate</name>
        <dbReference type="ChEBI" id="CHEBI:29991"/>
    </ligand>
</feature>
<feature type="binding site" evidence="1">
    <location>
        <position position="127"/>
    </location>
    <ligand>
        <name>L-aspartate</name>
        <dbReference type="ChEBI" id="CHEBI:29991"/>
    </ligand>
</feature>
<feature type="binding site" evidence="1">
    <location>
        <position position="127"/>
    </location>
    <ligand>
        <name>L-citrulline</name>
        <dbReference type="ChEBI" id="CHEBI:57743"/>
    </ligand>
</feature>
<feature type="binding site" evidence="1">
    <location>
        <position position="128"/>
    </location>
    <ligand>
        <name>L-aspartate</name>
        <dbReference type="ChEBI" id="CHEBI:29991"/>
    </ligand>
</feature>
<feature type="binding site" evidence="1">
    <location>
        <position position="131"/>
    </location>
    <ligand>
        <name>L-citrulline</name>
        <dbReference type="ChEBI" id="CHEBI:57743"/>
    </ligand>
</feature>
<feature type="binding site" evidence="1">
    <location>
        <position position="182"/>
    </location>
    <ligand>
        <name>L-citrulline</name>
        <dbReference type="ChEBI" id="CHEBI:57743"/>
    </ligand>
</feature>
<feature type="binding site" evidence="1">
    <location>
        <position position="191"/>
    </location>
    <ligand>
        <name>L-citrulline</name>
        <dbReference type="ChEBI" id="CHEBI:57743"/>
    </ligand>
</feature>
<feature type="binding site" evidence="1">
    <location>
        <position position="267"/>
    </location>
    <ligand>
        <name>L-citrulline</name>
        <dbReference type="ChEBI" id="CHEBI:57743"/>
    </ligand>
</feature>
<feature type="binding site" evidence="1">
    <location>
        <position position="279"/>
    </location>
    <ligand>
        <name>L-citrulline</name>
        <dbReference type="ChEBI" id="CHEBI:57743"/>
    </ligand>
</feature>
<gene>
    <name evidence="1" type="primary">argG</name>
    <name type="ordered locus">BAB1_0071</name>
</gene>
<comment type="catalytic activity">
    <reaction evidence="1">
        <text>L-citrulline + L-aspartate + ATP = 2-(N(omega)-L-arginino)succinate + AMP + diphosphate + H(+)</text>
        <dbReference type="Rhea" id="RHEA:10932"/>
        <dbReference type="ChEBI" id="CHEBI:15378"/>
        <dbReference type="ChEBI" id="CHEBI:29991"/>
        <dbReference type="ChEBI" id="CHEBI:30616"/>
        <dbReference type="ChEBI" id="CHEBI:33019"/>
        <dbReference type="ChEBI" id="CHEBI:57472"/>
        <dbReference type="ChEBI" id="CHEBI:57743"/>
        <dbReference type="ChEBI" id="CHEBI:456215"/>
        <dbReference type="EC" id="6.3.4.5"/>
    </reaction>
</comment>
<comment type="pathway">
    <text evidence="1">Amino-acid biosynthesis; L-arginine biosynthesis; L-arginine from L-ornithine and carbamoyl phosphate: step 2/3.</text>
</comment>
<comment type="subunit">
    <text evidence="1">Homotetramer.</text>
</comment>
<comment type="subcellular location">
    <subcellularLocation>
        <location evidence="1">Cytoplasm</location>
    </subcellularLocation>
</comment>
<comment type="similarity">
    <text evidence="1">Belongs to the argininosuccinate synthase family. Type 1 subfamily.</text>
</comment>
<dbReference type="EC" id="6.3.4.5" evidence="1"/>
<dbReference type="EMBL" id="AM040264">
    <property type="protein sequence ID" value="CAJ10027.1"/>
    <property type="molecule type" value="Genomic_DNA"/>
</dbReference>
<dbReference type="RefSeq" id="WP_002965322.1">
    <property type="nucleotide sequence ID" value="NZ_KN046823.1"/>
</dbReference>
<dbReference type="SMR" id="Q2YPQ8"/>
<dbReference type="STRING" id="359391.BAB1_0071"/>
<dbReference type="KEGG" id="bmf:BAB1_0071"/>
<dbReference type="PATRIC" id="fig|359391.11.peg.1495"/>
<dbReference type="HOGENOM" id="CLU_032784_4_2_5"/>
<dbReference type="PhylomeDB" id="Q2YPQ8"/>
<dbReference type="UniPathway" id="UPA00068">
    <property type="reaction ID" value="UER00113"/>
</dbReference>
<dbReference type="Proteomes" id="UP000002719">
    <property type="component" value="Chromosome I"/>
</dbReference>
<dbReference type="GO" id="GO:0005737">
    <property type="term" value="C:cytoplasm"/>
    <property type="evidence" value="ECO:0007669"/>
    <property type="project" value="UniProtKB-SubCell"/>
</dbReference>
<dbReference type="GO" id="GO:0004055">
    <property type="term" value="F:argininosuccinate synthase activity"/>
    <property type="evidence" value="ECO:0007669"/>
    <property type="project" value="UniProtKB-UniRule"/>
</dbReference>
<dbReference type="GO" id="GO:0005524">
    <property type="term" value="F:ATP binding"/>
    <property type="evidence" value="ECO:0007669"/>
    <property type="project" value="UniProtKB-UniRule"/>
</dbReference>
<dbReference type="GO" id="GO:0000053">
    <property type="term" value="P:argininosuccinate metabolic process"/>
    <property type="evidence" value="ECO:0007669"/>
    <property type="project" value="TreeGrafter"/>
</dbReference>
<dbReference type="GO" id="GO:0006526">
    <property type="term" value="P:L-arginine biosynthetic process"/>
    <property type="evidence" value="ECO:0007669"/>
    <property type="project" value="UniProtKB-UniRule"/>
</dbReference>
<dbReference type="GO" id="GO:0000050">
    <property type="term" value="P:urea cycle"/>
    <property type="evidence" value="ECO:0007669"/>
    <property type="project" value="TreeGrafter"/>
</dbReference>
<dbReference type="CDD" id="cd01999">
    <property type="entry name" value="ASS"/>
    <property type="match status" value="1"/>
</dbReference>
<dbReference type="FunFam" id="3.40.50.620:FF:000019">
    <property type="entry name" value="Argininosuccinate synthase"/>
    <property type="match status" value="1"/>
</dbReference>
<dbReference type="FunFam" id="3.90.1260.10:FF:000007">
    <property type="entry name" value="Argininosuccinate synthase"/>
    <property type="match status" value="1"/>
</dbReference>
<dbReference type="Gene3D" id="3.90.1260.10">
    <property type="entry name" value="Argininosuccinate synthetase, chain A, domain 2"/>
    <property type="match status" value="1"/>
</dbReference>
<dbReference type="Gene3D" id="3.40.50.620">
    <property type="entry name" value="HUPs"/>
    <property type="match status" value="1"/>
</dbReference>
<dbReference type="Gene3D" id="1.20.5.470">
    <property type="entry name" value="Single helix bin"/>
    <property type="match status" value="1"/>
</dbReference>
<dbReference type="HAMAP" id="MF_00005">
    <property type="entry name" value="Arg_succ_synth_type1"/>
    <property type="match status" value="1"/>
</dbReference>
<dbReference type="InterPro" id="IPR048268">
    <property type="entry name" value="Arginosuc_syn_C"/>
</dbReference>
<dbReference type="InterPro" id="IPR048267">
    <property type="entry name" value="Arginosuc_syn_N"/>
</dbReference>
<dbReference type="InterPro" id="IPR001518">
    <property type="entry name" value="Arginosuc_synth"/>
</dbReference>
<dbReference type="InterPro" id="IPR018223">
    <property type="entry name" value="Arginosuc_synth_CS"/>
</dbReference>
<dbReference type="InterPro" id="IPR023434">
    <property type="entry name" value="Arginosuc_synth_type_1_subfam"/>
</dbReference>
<dbReference type="InterPro" id="IPR024074">
    <property type="entry name" value="AS_cat/multimer_dom_body"/>
</dbReference>
<dbReference type="InterPro" id="IPR014729">
    <property type="entry name" value="Rossmann-like_a/b/a_fold"/>
</dbReference>
<dbReference type="NCBIfam" id="TIGR00032">
    <property type="entry name" value="argG"/>
    <property type="match status" value="1"/>
</dbReference>
<dbReference type="NCBIfam" id="NF001770">
    <property type="entry name" value="PRK00509.1"/>
    <property type="match status" value="1"/>
</dbReference>
<dbReference type="PANTHER" id="PTHR11587">
    <property type="entry name" value="ARGININOSUCCINATE SYNTHASE"/>
    <property type="match status" value="1"/>
</dbReference>
<dbReference type="PANTHER" id="PTHR11587:SF2">
    <property type="entry name" value="ARGININOSUCCINATE SYNTHASE"/>
    <property type="match status" value="1"/>
</dbReference>
<dbReference type="Pfam" id="PF20979">
    <property type="entry name" value="Arginosuc_syn_C"/>
    <property type="match status" value="1"/>
</dbReference>
<dbReference type="Pfam" id="PF00764">
    <property type="entry name" value="Arginosuc_synth"/>
    <property type="match status" value="1"/>
</dbReference>
<dbReference type="SUPFAM" id="SSF52402">
    <property type="entry name" value="Adenine nucleotide alpha hydrolases-like"/>
    <property type="match status" value="1"/>
</dbReference>
<dbReference type="SUPFAM" id="SSF69864">
    <property type="entry name" value="Argininosuccinate synthetase, C-terminal domain"/>
    <property type="match status" value="1"/>
</dbReference>
<dbReference type="PROSITE" id="PS00564">
    <property type="entry name" value="ARGININOSUCCIN_SYN_1"/>
    <property type="match status" value="1"/>
</dbReference>
<dbReference type="PROSITE" id="PS00565">
    <property type="entry name" value="ARGININOSUCCIN_SYN_2"/>
    <property type="match status" value="1"/>
</dbReference>
<protein>
    <recommendedName>
        <fullName evidence="1">Argininosuccinate synthase</fullName>
        <ecNumber evidence="1">6.3.4.5</ecNumber>
    </recommendedName>
    <alternativeName>
        <fullName evidence="1">Citrulline--aspartate ligase</fullName>
    </alternativeName>
</protein>
<accession>Q2YPQ8</accession>
<organism>
    <name type="scientific">Brucella abortus (strain 2308)</name>
    <dbReference type="NCBI Taxonomy" id="359391"/>
    <lineage>
        <taxon>Bacteria</taxon>
        <taxon>Pseudomonadati</taxon>
        <taxon>Pseudomonadota</taxon>
        <taxon>Alphaproteobacteria</taxon>
        <taxon>Hyphomicrobiales</taxon>
        <taxon>Brucellaceae</taxon>
        <taxon>Brucella/Ochrobactrum group</taxon>
        <taxon>Brucella</taxon>
    </lineage>
</organism>